<sequence>MRVLGLDVGDRTIGVAVSDPLGFTAQGITTVHRKSVKEDIDELKKICKEYAVELIISGLPKNMNGTVGEQGEKVIEFCELLKSELKMPIKMWDERLTTVAAHRAMLEANLSRAKRKKIVDKMAATYILQGYLDSI</sequence>
<proteinExistence type="inferred from homology"/>
<comment type="function">
    <text evidence="1">Could be a nuclease involved in processing of the 5'-end of pre-16S rRNA.</text>
</comment>
<comment type="subcellular location">
    <subcellularLocation>
        <location evidence="1">Cytoplasm</location>
    </subcellularLocation>
</comment>
<comment type="similarity">
    <text evidence="1">Belongs to the YqgF nuclease family.</text>
</comment>
<keyword id="KW-0963">Cytoplasm</keyword>
<keyword id="KW-0378">Hydrolase</keyword>
<keyword id="KW-0540">Nuclease</keyword>
<keyword id="KW-1185">Reference proteome</keyword>
<keyword id="KW-0690">Ribosome biogenesis</keyword>
<dbReference type="EC" id="3.1.-.-" evidence="1"/>
<dbReference type="EMBL" id="CP000382">
    <property type="protein sequence ID" value="ABK60457.1"/>
    <property type="molecule type" value="Genomic_DNA"/>
</dbReference>
<dbReference type="SMR" id="A0Q149"/>
<dbReference type="STRING" id="386415.NT01CX_2278"/>
<dbReference type="KEGG" id="cno:NT01CX_2278"/>
<dbReference type="eggNOG" id="COG0816">
    <property type="taxonomic scope" value="Bacteria"/>
</dbReference>
<dbReference type="HOGENOM" id="CLU_098240_2_0_9"/>
<dbReference type="Proteomes" id="UP000008220">
    <property type="component" value="Chromosome"/>
</dbReference>
<dbReference type="GO" id="GO:0005829">
    <property type="term" value="C:cytosol"/>
    <property type="evidence" value="ECO:0007669"/>
    <property type="project" value="TreeGrafter"/>
</dbReference>
<dbReference type="GO" id="GO:0004518">
    <property type="term" value="F:nuclease activity"/>
    <property type="evidence" value="ECO:0007669"/>
    <property type="project" value="UniProtKB-KW"/>
</dbReference>
<dbReference type="GO" id="GO:0000967">
    <property type="term" value="P:rRNA 5'-end processing"/>
    <property type="evidence" value="ECO:0007669"/>
    <property type="project" value="UniProtKB-UniRule"/>
</dbReference>
<dbReference type="CDD" id="cd16964">
    <property type="entry name" value="YqgF"/>
    <property type="match status" value="1"/>
</dbReference>
<dbReference type="Gene3D" id="3.30.420.140">
    <property type="entry name" value="YqgF/RNase H-like domain"/>
    <property type="match status" value="1"/>
</dbReference>
<dbReference type="HAMAP" id="MF_00651">
    <property type="entry name" value="Nuclease_YqgF"/>
    <property type="match status" value="1"/>
</dbReference>
<dbReference type="InterPro" id="IPR012337">
    <property type="entry name" value="RNaseH-like_sf"/>
</dbReference>
<dbReference type="InterPro" id="IPR005227">
    <property type="entry name" value="YqgF"/>
</dbReference>
<dbReference type="InterPro" id="IPR006641">
    <property type="entry name" value="YqgF/RNaseH-like_dom"/>
</dbReference>
<dbReference type="InterPro" id="IPR037027">
    <property type="entry name" value="YqgF/RNaseH-like_dom_sf"/>
</dbReference>
<dbReference type="NCBIfam" id="TIGR00250">
    <property type="entry name" value="RNAse_H_YqgF"/>
    <property type="match status" value="1"/>
</dbReference>
<dbReference type="PANTHER" id="PTHR33317">
    <property type="entry name" value="POLYNUCLEOTIDYL TRANSFERASE, RIBONUCLEASE H-LIKE SUPERFAMILY PROTEIN"/>
    <property type="match status" value="1"/>
</dbReference>
<dbReference type="PANTHER" id="PTHR33317:SF4">
    <property type="entry name" value="POLYNUCLEOTIDYL TRANSFERASE, RIBONUCLEASE H-LIKE SUPERFAMILY PROTEIN"/>
    <property type="match status" value="1"/>
</dbReference>
<dbReference type="Pfam" id="PF03652">
    <property type="entry name" value="RuvX"/>
    <property type="match status" value="1"/>
</dbReference>
<dbReference type="SMART" id="SM00732">
    <property type="entry name" value="YqgFc"/>
    <property type="match status" value="1"/>
</dbReference>
<dbReference type="SUPFAM" id="SSF53098">
    <property type="entry name" value="Ribonuclease H-like"/>
    <property type="match status" value="1"/>
</dbReference>
<reference key="1">
    <citation type="journal article" date="2006" name="Nat. Biotechnol.">
        <title>The genome and transcriptomes of the anti-tumor agent Clostridium novyi-NT.</title>
        <authorList>
            <person name="Bettegowda C."/>
            <person name="Huang X."/>
            <person name="Lin J."/>
            <person name="Cheong I."/>
            <person name="Kohli M."/>
            <person name="Szabo S.A."/>
            <person name="Zhang X."/>
            <person name="Diaz L.A. Jr."/>
            <person name="Velculescu V.E."/>
            <person name="Parmigiani G."/>
            <person name="Kinzler K.W."/>
            <person name="Vogelstein B."/>
            <person name="Zhou S."/>
        </authorList>
    </citation>
    <scope>NUCLEOTIDE SEQUENCE [LARGE SCALE GENOMIC DNA]</scope>
    <source>
        <strain>NT</strain>
    </source>
</reference>
<protein>
    <recommendedName>
        <fullName evidence="1">Putative pre-16S rRNA nuclease</fullName>
        <ecNumber evidence="1">3.1.-.-</ecNumber>
    </recommendedName>
</protein>
<organism>
    <name type="scientific">Clostridium novyi (strain NT)</name>
    <dbReference type="NCBI Taxonomy" id="386415"/>
    <lineage>
        <taxon>Bacteria</taxon>
        <taxon>Bacillati</taxon>
        <taxon>Bacillota</taxon>
        <taxon>Clostridia</taxon>
        <taxon>Eubacteriales</taxon>
        <taxon>Clostridiaceae</taxon>
        <taxon>Clostridium</taxon>
    </lineage>
</organism>
<name>YQGF_CLONN</name>
<feature type="chain" id="PRO_1000061507" description="Putative pre-16S rRNA nuclease">
    <location>
        <begin position="1"/>
        <end position="135"/>
    </location>
</feature>
<accession>A0Q149</accession>
<evidence type="ECO:0000255" key="1">
    <source>
        <dbReference type="HAMAP-Rule" id="MF_00651"/>
    </source>
</evidence>
<gene>
    <name type="ordered locus">NT01CX_2278</name>
</gene>